<keyword id="KW-0249">Electron transport</keyword>
<keyword id="KW-0472">Membrane</keyword>
<keyword id="KW-0602">Photosynthesis</keyword>
<keyword id="KW-0793">Thylakoid</keyword>
<keyword id="KW-0812">Transmembrane</keyword>
<keyword id="KW-1133">Transmembrane helix</keyword>
<keyword id="KW-0813">Transport</keyword>
<proteinExistence type="inferred from homology"/>
<comment type="function">
    <text evidence="1">Component of the cytochrome b6-f complex, which mediates electron transfer between photosystem II (PSII) and photosystem I (PSI), cyclic electron flow around PSI, and state transitions.</text>
</comment>
<comment type="subunit">
    <text evidence="1">The 4 large subunits of the cytochrome b6-f complex are cytochrome b6, subunit IV (17 kDa polypeptide, PetD), cytochrome f and the Rieske protein, while the 4 small subunits are PetG, PetL, PetM and PetN. The complex functions as a dimer.</text>
</comment>
<comment type="subcellular location">
    <subcellularLocation>
        <location evidence="1">Cellular thylakoid membrane</location>
        <topology evidence="1">Single-pass membrane protein</topology>
    </subcellularLocation>
</comment>
<comment type="similarity">
    <text evidence="1">Belongs to the PetN family.</text>
</comment>
<dbReference type="EMBL" id="AP009552">
    <property type="protein sequence ID" value="BAG02432.1"/>
    <property type="molecule type" value="Genomic_DNA"/>
</dbReference>
<dbReference type="RefSeq" id="WP_012265708.1">
    <property type="nucleotide sequence ID" value="NC_010296.1"/>
</dbReference>
<dbReference type="SMR" id="B0JID4"/>
<dbReference type="STRING" id="449447.MAE_26100"/>
<dbReference type="PaxDb" id="449447-MAE_26100"/>
<dbReference type="EnsemblBacteria" id="BAG02432">
    <property type="protein sequence ID" value="BAG02432"/>
    <property type="gene ID" value="MAE_26100"/>
</dbReference>
<dbReference type="GeneID" id="66709306"/>
<dbReference type="KEGG" id="mar:MAE_26100"/>
<dbReference type="eggNOG" id="ENOG5033AE4">
    <property type="taxonomic scope" value="Bacteria"/>
</dbReference>
<dbReference type="HOGENOM" id="CLU_215774_1_0_3"/>
<dbReference type="BioCyc" id="MAER449447:MAE_RS29395-MONOMER"/>
<dbReference type="Proteomes" id="UP000001510">
    <property type="component" value="Chromosome"/>
</dbReference>
<dbReference type="GO" id="GO:0009512">
    <property type="term" value="C:cytochrome b6f complex"/>
    <property type="evidence" value="ECO:0007669"/>
    <property type="project" value="InterPro"/>
</dbReference>
<dbReference type="GO" id="GO:0031676">
    <property type="term" value="C:plasma membrane-derived thylakoid membrane"/>
    <property type="evidence" value="ECO:0007669"/>
    <property type="project" value="UniProtKB-SubCell"/>
</dbReference>
<dbReference type="GO" id="GO:0045158">
    <property type="term" value="F:electron transporter, transferring electrons within cytochrome b6/f complex of photosystem II activity"/>
    <property type="evidence" value="ECO:0007669"/>
    <property type="project" value="InterPro"/>
</dbReference>
<dbReference type="GO" id="GO:0017004">
    <property type="term" value="P:cytochrome complex assembly"/>
    <property type="evidence" value="ECO:0007669"/>
    <property type="project" value="UniProtKB-UniRule"/>
</dbReference>
<dbReference type="GO" id="GO:0015979">
    <property type="term" value="P:photosynthesis"/>
    <property type="evidence" value="ECO:0007669"/>
    <property type="project" value="UniProtKB-KW"/>
</dbReference>
<dbReference type="HAMAP" id="MF_00395">
    <property type="entry name" value="Cytb6_f_PetN"/>
    <property type="match status" value="1"/>
</dbReference>
<dbReference type="InterPro" id="IPR036143">
    <property type="entry name" value="Cytochr_b6-f_cplx_su8_sf"/>
</dbReference>
<dbReference type="InterPro" id="IPR005497">
    <property type="entry name" value="Cytochrome_b6-f_cplx_su8"/>
</dbReference>
<dbReference type="NCBIfam" id="NF011331">
    <property type="entry name" value="PRK14747.1"/>
    <property type="match status" value="1"/>
</dbReference>
<dbReference type="Pfam" id="PF03742">
    <property type="entry name" value="PetN"/>
    <property type="match status" value="1"/>
</dbReference>
<dbReference type="SUPFAM" id="SSF103451">
    <property type="entry name" value="PetN subunit of the cytochrome b6f complex"/>
    <property type="match status" value="1"/>
</dbReference>
<protein>
    <recommendedName>
        <fullName evidence="1">Cytochrome b6-f complex subunit 8</fullName>
    </recommendedName>
    <alternativeName>
        <fullName evidence="1">Cytochrome b6-f complex subunit PetN</fullName>
    </alternativeName>
    <alternativeName>
        <fullName evidence="1">Cytochrome b6-f complex subunit VIII</fullName>
    </alternativeName>
</protein>
<sequence>MDILTLGWVSILALFTWSIAMVVWGRNGF</sequence>
<gene>
    <name evidence="1" type="primary">petN</name>
    <name type="ordered locus">MAE_26100</name>
</gene>
<accession>B0JID4</accession>
<name>PETN_MICAN</name>
<evidence type="ECO:0000255" key="1">
    <source>
        <dbReference type="HAMAP-Rule" id="MF_00395"/>
    </source>
</evidence>
<feature type="chain" id="PRO_1000080325" description="Cytochrome b6-f complex subunit 8">
    <location>
        <begin position="1"/>
        <end position="29"/>
    </location>
</feature>
<feature type="transmembrane region" description="Helical" evidence="1">
    <location>
        <begin position="3"/>
        <end position="23"/>
    </location>
</feature>
<organism>
    <name type="scientific">Microcystis aeruginosa (strain NIES-843 / IAM M-2473)</name>
    <dbReference type="NCBI Taxonomy" id="449447"/>
    <lineage>
        <taxon>Bacteria</taxon>
        <taxon>Bacillati</taxon>
        <taxon>Cyanobacteriota</taxon>
        <taxon>Cyanophyceae</taxon>
        <taxon>Oscillatoriophycideae</taxon>
        <taxon>Chroococcales</taxon>
        <taxon>Microcystaceae</taxon>
        <taxon>Microcystis</taxon>
    </lineage>
</organism>
<reference key="1">
    <citation type="journal article" date="2007" name="DNA Res.">
        <title>Complete genomic structure of the bloom-forming toxic cyanobacterium Microcystis aeruginosa NIES-843.</title>
        <authorList>
            <person name="Kaneko T."/>
            <person name="Nakajima N."/>
            <person name="Okamoto S."/>
            <person name="Suzuki I."/>
            <person name="Tanabe Y."/>
            <person name="Tamaoki M."/>
            <person name="Nakamura Y."/>
            <person name="Kasai F."/>
            <person name="Watanabe A."/>
            <person name="Kawashima K."/>
            <person name="Kishida Y."/>
            <person name="Ono A."/>
            <person name="Shimizu Y."/>
            <person name="Takahashi C."/>
            <person name="Minami C."/>
            <person name="Fujishiro T."/>
            <person name="Kohara M."/>
            <person name="Katoh M."/>
            <person name="Nakazaki N."/>
            <person name="Nakayama S."/>
            <person name="Yamada M."/>
            <person name="Tabata S."/>
            <person name="Watanabe M.M."/>
        </authorList>
    </citation>
    <scope>NUCLEOTIDE SEQUENCE [LARGE SCALE GENOMIC DNA]</scope>
    <source>
        <strain>NIES-843 / IAM M-247</strain>
    </source>
</reference>